<proteinExistence type="predicted"/>
<name>Y058_AQUAE</name>
<accession>O66470</accession>
<dbReference type="EMBL" id="AE000657">
    <property type="protein sequence ID" value="AAC06432.1"/>
    <property type="molecule type" value="Genomic_DNA"/>
</dbReference>
<dbReference type="PIR" id="C70305">
    <property type="entry name" value="C70305"/>
</dbReference>
<dbReference type="RefSeq" id="NP_213030.1">
    <property type="nucleotide sequence ID" value="NC_000918.1"/>
</dbReference>
<dbReference type="RefSeq" id="WP_010879968.1">
    <property type="nucleotide sequence ID" value="NC_000918.1"/>
</dbReference>
<dbReference type="SMR" id="O66470"/>
<dbReference type="EnsemblBacteria" id="AAC06432">
    <property type="protein sequence ID" value="AAC06432"/>
    <property type="gene ID" value="aq_058"/>
</dbReference>
<dbReference type="KEGG" id="aae:aq_058"/>
<dbReference type="HOGENOM" id="CLU_2105634_0_0_0"/>
<dbReference type="InParanoid" id="O66470"/>
<dbReference type="OrthoDB" id="14335at2"/>
<dbReference type="Proteomes" id="UP000000798">
    <property type="component" value="Chromosome"/>
</dbReference>
<organism>
    <name type="scientific">Aquifex aeolicus (strain VF5)</name>
    <dbReference type="NCBI Taxonomy" id="224324"/>
    <lineage>
        <taxon>Bacteria</taxon>
        <taxon>Pseudomonadati</taxon>
        <taxon>Aquificota</taxon>
        <taxon>Aquificia</taxon>
        <taxon>Aquificales</taxon>
        <taxon>Aquificaceae</taxon>
        <taxon>Aquifex</taxon>
    </lineage>
</organism>
<keyword id="KW-1185">Reference proteome</keyword>
<reference key="1">
    <citation type="journal article" date="1998" name="Nature">
        <title>The complete genome of the hyperthermophilic bacterium Aquifex aeolicus.</title>
        <authorList>
            <person name="Deckert G."/>
            <person name="Warren P.V."/>
            <person name="Gaasterland T."/>
            <person name="Young W.G."/>
            <person name="Lenox A.L."/>
            <person name="Graham D.E."/>
            <person name="Overbeek R."/>
            <person name="Snead M.A."/>
            <person name="Keller M."/>
            <person name="Aujay M."/>
            <person name="Huber R."/>
            <person name="Feldman R.A."/>
            <person name="Short J.M."/>
            <person name="Olsen G.J."/>
            <person name="Swanson R.V."/>
        </authorList>
    </citation>
    <scope>NUCLEOTIDE SEQUENCE [LARGE SCALE GENOMIC DNA]</scope>
    <source>
        <strain>VF5</strain>
    </source>
</reference>
<sequence>MGDVNFLEQMLLKSTMKEIEERYDDVITIYKYDYEIRGIAEKLYRLSKIVEEVFKEIPNPEKKLDESLYTTLYSVLKDINSILYDLSIATNEQISYVLMQAYRKLDNIDNLLSKLK</sequence>
<feature type="chain" id="PRO_0000186837" description="Uncharacterized protein aq_058">
    <location>
        <begin position="1"/>
        <end position="116"/>
    </location>
</feature>
<gene>
    <name type="ordered locus">aq_058</name>
</gene>
<protein>
    <recommendedName>
        <fullName>Uncharacterized protein aq_058</fullName>
    </recommendedName>
</protein>